<sequence length="233" mass="25846">MDCKYLLELLDSYSFIRSSRSFSSPIIIHGVAGCGKSTIIQKIALAFPELLIGSFTPALLDSNSGRKQLAVTSDPLDILDEYLGGPNPVVRLAKFCDPLQYSCEQPEVPHFTSLLTWRFCVRTTALLNGIFGCQIKSRREDLCHLTHENPYTTDPKGVVVAHEQEVINLLLQHGCPVTPTQHLWGLTIPVVSVYITSIASLSTVDRANLFLSLTRDSKALHIFEFDAWSHATC</sequence>
<organism>
    <name type="scientific">Narcissus mosaic virus</name>
    <name type="common">NMV</name>
    <dbReference type="NCBI Taxonomy" id="12180"/>
    <lineage>
        <taxon>Viruses</taxon>
        <taxon>Riboviria</taxon>
        <taxon>Orthornavirae</taxon>
        <taxon>Kitrinoviricota</taxon>
        <taxon>Alsuviricetes</taxon>
        <taxon>Tymovirales</taxon>
        <taxon>Alphaflexiviridae</taxon>
        <taxon>Potexvirus</taxon>
    </lineage>
</organism>
<keyword id="KW-1035">Host cytoplasm</keyword>
<keyword id="KW-0945">Host-virus interaction</keyword>
<keyword id="KW-1090">Inhibition of host innate immune response by virus</keyword>
<keyword id="KW-1185">Reference proteome</keyword>
<keyword id="KW-0694">RNA-binding</keyword>
<keyword id="KW-0941">Suppressor of RNA silencing</keyword>
<keyword id="KW-0813">Transport</keyword>
<keyword id="KW-0899">Viral immunoevasion</keyword>
<keyword id="KW-0916">Viral movement protein</keyword>
<gene>
    <name type="ORF">ORF2</name>
</gene>
<name>TGB1_NMV</name>
<reference key="1">
    <citation type="journal article" date="1989" name="J. Gen. Virol.">
        <title>Nucleotide sequence of narcissus mosaic virus RNA.</title>
        <authorList>
            <person name="Zuidema D."/>
            <person name="Linthorst H.J.M."/>
            <person name="Huisman M.J."/>
            <person name="Asjes C.J."/>
            <person name="Bol J.F."/>
        </authorList>
    </citation>
    <scope>NUCLEOTIDE SEQUENCE [GENOMIC RNA]</scope>
</reference>
<reference key="2">
    <citation type="journal article" date="2005" name="Mol. Plant Microbe Interact.">
        <title>A new cell-to-cell transport model for Potexviruses.</title>
        <authorList>
            <person name="Verchot-Lubicz J."/>
        </authorList>
    </citation>
    <scope>REVIEW</scope>
</reference>
<dbReference type="EMBL" id="D13747">
    <property type="protein sequence ID" value="BAA02892.1"/>
    <property type="molecule type" value="Genomic_RNA"/>
</dbReference>
<dbReference type="PIR" id="JT0471">
    <property type="entry name" value="WMWGN1"/>
</dbReference>
<dbReference type="RefSeq" id="NP_040779.1">
    <property type="nucleotide sequence ID" value="NC_001441.1"/>
</dbReference>
<dbReference type="KEGG" id="vg:1494020"/>
<dbReference type="OrthoDB" id="16070at10239"/>
<dbReference type="Proteomes" id="UP000008865">
    <property type="component" value="Genome"/>
</dbReference>
<dbReference type="GO" id="GO:0030430">
    <property type="term" value="C:host cell cytoplasm"/>
    <property type="evidence" value="ECO:0007669"/>
    <property type="project" value="UniProtKB-SubCell"/>
</dbReference>
<dbReference type="GO" id="GO:0005524">
    <property type="term" value="F:ATP binding"/>
    <property type="evidence" value="ECO:0007669"/>
    <property type="project" value="InterPro"/>
</dbReference>
<dbReference type="GO" id="GO:0003723">
    <property type="term" value="F:RNA binding"/>
    <property type="evidence" value="ECO:0007669"/>
    <property type="project" value="UniProtKB-KW"/>
</dbReference>
<dbReference type="GO" id="GO:0052170">
    <property type="term" value="P:symbiont-mediated suppression of host innate immune response"/>
    <property type="evidence" value="ECO:0007669"/>
    <property type="project" value="UniProtKB-KW"/>
</dbReference>
<dbReference type="GO" id="GO:0046740">
    <property type="term" value="P:transport of virus in host, cell to cell"/>
    <property type="evidence" value="ECO:0007669"/>
    <property type="project" value="UniProtKB-KW"/>
</dbReference>
<dbReference type="InterPro" id="IPR027351">
    <property type="entry name" value="(+)RNA_virus_helicase_core_dom"/>
</dbReference>
<dbReference type="InterPro" id="IPR027417">
    <property type="entry name" value="P-loop_NTPase"/>
</dbReference>
<dbReference type="Pfam" id="PF01443">
    <property type="entry name" value="Viral_helicase1"/>
    <property type="match status" value="1"/>
</dbReference>
<dbReference type="SUPFAM" id="SSF52540">
    <property type="entry name" value="P-loop containing nucleoside triphosphate hydrolases"/>
    <property type="match status" value="1"/>
</dbReference>
<dbReference type="PROSITE" id="PS51657">
    <property type="entry name" value="PSRV_HELICASE"/>
    <property type="match status" value="1"/>
</dbReference>
<accession>P15096</accession>
<comment type="function">
    <text evidence="1">Transports viral genome to neighboring plant cells directly through plasmosdesmata, without any budding. The movement protein allows efficient cell to cell propagation, by bypassing the host cell wall barrier. Increases plasmodesma size exclusion limit. Acts as a suppressor of RNA-mediated gene silencing, also known as post-transcriptional gene silencing (PTGS), a mechanism of plant viral defense that limits the accumulation of viral RNAs (By similarity).</text>
</comment>
<comment type="subunit">
    <text evidence="1">Homodimer and homooligomer. Interacts with capsid protein. Interacts with host AGO1; this interaction targets the host protein for degradation, thereby suppressing the antiviral RNA silencing (By similarity).</text>
</comment>
<comment type="subcellular location">
    <subcellularLocation>
        <location evidence="1">Host cytoplasm</location>
    </subcellularLocation>
</comment>
<comment type="miscellaneous">
    <text>TGBp1, TGBp2 and TGBp3 seem to act together for cell-to-cell propagation. TGBp1 is the main movement protein that physically cross the plasmodesma with the viral genome. TGBp2 and TGBp3 would facilitate TGBp1 function.</text>
</comment>
<comment type="similarity">
    <text evidence="2">Belongs to the Tymovirales TGBp1 protein family.</text>
</comment>
<evidence type="ECO:0000250" key="1"/>
<evidence type="ECO:0000305" key="2"/>
<organismHost>
    <name type="scientific">Narcissus pseudonarcissus</name>
    <name type="common">Daffodil</name>
    <dbReference type="NCBI Taxonomy" id="39639"/>
</organismHost>
<proteinExistence type="inferred from homology"/>
<protein>
    <recommendedName>
        <fullName>Movement and silencing protein TGBp1</fullName>
    </recommendedName>
    <alternativeName>
        <fullName>25 kDa protein</fullName>
    </alternativeName>
    <alternativeName>
        <fullName>Silencing suppressor P25</fullName>
    </alternativeName>
    <alternativeName>
        <fullName>Triple gene block 1 protein</fullName>
        <shortName>TGBp1</shortName>
    </alternativeName>
</protein>
<feature type="chain" id="PRO_0000222567" description="Movement and silencing protein TGBp1">
    <location>
        <begin position="1"/>
        <end position="233"/>
    </location>
</feature>
<feature type="domain" description="(+)RNA virus helicase ATP-binding">
    <location>
        <begin position="1"/>
        <end position="134"/>
    </location>
</feature>
<feature type="domain" description="(+)RNA virus helicase C-terminal">
    <location>
        <begin position="135"/>
        <end position="233"/>
    </location>
</feature>